<feature type="chain" id="PRO_0000334456" description="Na(+)/H(+) antiporter NhaA">
    <location>
        <begin position="1"/>
        <end position="382"/>
    </location>
</feature>
<feature type="transmembrane region" description="Helical" evidence="1">
    <location>
        <begin position="14"/>
        <end position="34"/>
    </location>
</feature>
<feature type="transmembrane region" description="Helical" evidence="1">
    <location>
        <begin position="47"/>
        <end position="67"/>
    </location>
</feature>
<feature type="transmembrane region" description="Helical" evidence="1">
    <location>
        <begin position="87"/>
        <end position="107"/>
    </location>
</feature>
<feature type="transmembrane region" description="Helical" evidence="1">
    <location>
        <begin position="117"/>
        <end position="137"/>
    </location>
</feature>
<feature type="transmembrane region" description="Helical" evidence="1">
    <location>
        <begin position="146"/>
        <end position="166"/>
    </location>
</feature>
<feature type="transmembrane region" description="Helical" evidence="1">
    <location>
        <begin position="171"/>
        <end position="191"/>
    </location>
</feature>
<feature type="transmembrane region" description="Helical" evidence="1">
    <location>
        <begin position="205"/>
        <end position="225"/>
    </location>
</feature>
<feature type="transmembrane region" description="Helical" evidence="1">
    <location>
        <begin position="247"/>
        <end position="267"/>
    </location>
</feature>
<feature type="transmembrane region" description="Helical" evidence="1">
    <location>
        <begin position="271"/>
        <end position="291"/>
    </location>
</feature>
<feature type="transmembrane region" description="Helical" evidence="1">
    <location>
        <begin position="296"/>
        <end position="316"/>
    </location>
</feature>
<feature type="transmembrane region" description="Helical" evidence="1">
    <location>
        <begin position="321"/>
        <end position="341"/>
    </location>
</feature>
<feature type="transmembrane region" description="Helical" evidence="1">
    <location>
        <begin position="353"/>
        <end position="373"/>
    </location>
</feature>
<gene>
    <name evidence="4" type="primary">nhaA</name>
    <name type="ordered locus">VC_1627</name>
</gene>
<dbReference type="EMBL" id="AF051158">
    <property type="protein sequence ID" value="AAC33562.1"/>
    <property type="molecule type" value="Genomic_DNA"/>
</dbReference>
<dbReference type="EMBL" id="AE003852">
    <property type="protein sequence ID" value="AAF94778.1"/>
    <property type="molecule type" value="Genomic_DNA"/>
</dbReference>
<dbReference type="PIR" id="B82177">
    <property type="entry name" value="B82177"/>
</dbReference>
<dbReference type="RefSeq" id="NP_231264.1">
    <property type="nucleotide sequence ID" value="NC_002505.1"/>
</dbReference>
<dbReference type="RefSeq" id="WP_001281946.1">
    <property type="nucleotide sequence ID" value="NZ_LT906614.1"/>
</dbReference>
<dbReference type="SMR" id="O85187"/>
<dbReference type="STRING" id="243277.VC_1627"/>
<dbReference type="DNASU" id="2613882"/>
<dbReference type="EnsemblBacteria" id="AAF94778">
    <property type="protein sequence ID" value="AAF94778"/>
    <property type="gene ID" value="VC_1627"/>
</dbReference>
<dbReference type="KEGG" id="vch:VC_1627"/>
<dbReference type="PATRIC" id="fig|243277.26.peg.1555"/>
<dbReference type="eggNOG" id="COG3004">
    <property type="taxonomic scope" value="Bacteria"/>
</dbReference>
<dbReference type="HOGENOM" id="CLU_015803_1_0_6"/>
<dbReference type="Proteomes" id="UP000000584">
    <property type="component" value="Chromosome 1"/>
</dbReference>
<dbReference type="GO" id="GO:0005886">
    <property type="term" value="C:plasma membrane"/>
    <property type="evidence" value="ECO:0000318"/>
    <property type="project" value="GO_Central"/>
</dbReference>
<dbReference type="GO" id="GO:0015385">
    <property type="term" value="F:sodium:proton antiporter activity"/>
    <property type="evidence" value="ECO:0000318"/>
    <property type="project" value="GO_Central"/>
</dbReference>
<dbReference type="GO" id="GO:0006885">
    <property type="term" value="P:regulation of pH"/>
    <property type="evidence" value="ECO:0007669"/>
    <property type="project" value="InterPro"/>
</dbReference>
<dbReference type="Gene3D" id="1.20.1530.10">
    <property type="entry name" value="Na+/H+ antiporter like domain"/>
    <property type="match status" value="1"/>
</dbReference>
<dbReference type="HAMAP" id="MF_01844">
    <property type="entry name" value="NhaA"/>
    <property type="match status" value="1"/>
</dbReference>
<dbReference type="InterPro" id="IPR023171">
    <property type="entry name" value="Na/H_antiporter_dom_sf"/>
</dbReference>
<dbReference type="InterPro" id="IPR004670">
    <property type="entry name" value="NhaA"/>
</dbReference>
<dbReference type="NCBIfam" id="TIGR00773">
    <property type="entry name" value="NhaA"/>
    <property type="match status" value="1"/>
</dbReference>
<dbReference type="NCBIfam" id="NF007111">
    <property type="entry name" value="PRK09560.1"/>
    <property type="match status" value="1"/>
</dbReference>
<dbReference type="NCBIfam" id="NF007112">
    <property type="entry name" value="PRK09561.1"/>
    <property type="match status" value="1"/>
</dbReference>
<dbReference type="PANTHER" id="PTHR30341:SF0">
    <property type="entry name" value="NA(+)_H(+) ANTIPORTER NHAA"/>
    <property type="match status" value="1"/>
</dbReference>
<dbReference type="PANTHER" id="PTHR30341">
    <property type="entry name" value="SODIUM ION/PROTON ANTIPORTER NHAA-RELATED"/>
    <property type="match status" value="1"/>
</dbReference>
<dbReference type="Pfam" id="PF06965">
    <property type="entry name" value="Na_H_antiport_1"/>
    <property type="match status" value="1"/>
</dbReference>
<name>NHAA_VIBCH</name>
<evidence type="ECO:0000255" key="1">
    <source>
        <dbReference type="HAMAP-Rule" id="MF_01844"/>
    </source>
</evidence>
<evidence type="ECO:0000269" key="2">
    <source>
    </source>
</evidence>
<evidence type="ECO:0000269" key="3">
    <source>
    </source>
</evidence>
<evidence type="ECO:0000303" key="4">
    <source>
    </source>
</evidence>
<evidence type="ECO:0000305" key="5"/>
<evidence type="ECO:0000305" key="6">
    <source>
    </source>
</evidence>
<proteinExistence type="evidence at protein level"/>
<accession>O85187</accession>
<accession>Q7DCU3</accession>
<protein>
    <recommendedName>
        <fullName evidence="4">Na(+)/H(+) antiporter NhaA</fullName>
    </recommendedName>
    <alternativeName>
        <fullName evidence="1">Sodium/proton antiporter NhaA</fullName>
    </alternativeName>
</protein>
<keyword id="KW-0050">Antiport</keyword>
<keyword id="KW-0997">Cell inner membrane</keyword>
<keyword id="KW-1003">Cell membrane</keyword>
<keyword id="KW-0406">Ion transport</keyword>
<keyword id="KW-0472">Membrane</keyword>
<keyword id="KW-1185">Reference proteome</keyword>
<keyword id="KW-0915">Sodium</keyword>
<keyword id="KW-0739">Sodium transport</keyword>
<keyword id="KW-0812">Transmembrane</keyword>
<keyword id="KW-1133">Transmembrane helix</keyword>
<keyword id="KW-0813">Transport</keyword>
<reference key="1">
    <citation type="journal article" date="2000" name="J. Bacteriol.">
        <title>NhaA, an Na(+)/H(+) antiporter involved in environmental survival of Vibrio cholerae.</title>
        <authorList>
            <person name="Vimont S."/>
            <person name="Berche P."/>
        </authorList>
    </citation>
    <scope>NUCLEOTIDE SEQUENCE [GENOMIC DNA]</scope>
    <scope>FUNCTION AS ANTIPORTER</scope>
    <scope>INDUCTION</scope>
    <scope>DISRUPTION PHENOTYPE</scope>
    <source>
        <strain>N18 / Serotype O1</strain>
    </source>
</reference>
<reference key="2">
    <citation type="journal article" date="2000" name="Nature">
        <title>DNA sequence of both chromosomes of the cholera pathogen Vibrio cholerae.</title>
        <authorList>
            <person name="Heidelberg J.F."/>
            <person name="Eisen J.A."/>
            <person name="Nelson W.C."/>
            <person name="Clayton R.A."/>
            <person name="Gwinn M.L."/>
            <person name="Dodson R.J."/>
            <person name="Haft D.H."/>
            <person name="Hickey E.K."/>
            <person name="Peterson J.D."/>
            <person name="Umayam L.A."/>
            <person name="Gill S.R."/>
            <person name="Nelson K.E."/>
            <person name="Read T.D."/>
            <person name="Tettelin H."/>
            <person name="Richardson D.L."/>
            <person name="Ermolaeva M.D."/>
            <person name="Vamathevan J.J."/>
            <person name="Bass S."/>
            <person name="Qin H."/>
            <person name="Dragoi I."/>
            <person name="Sellers P."/>
            <person name="McDonald L.A."/>
            <person name="Utterback T.R."/>
            <person name="Fleischmann R.D."/>
            <person name="Nierman W.C."/>
            <person name="White O."/>
            <person name="Salzberg S.L."/>
            <person name="Smith H.O."/>
            <person name="Colwell R.R."/>
            <person name="Mekalanos J.J."/>
            <person name="Venter J.C."/>
            <person name="Fraser C.M."/>
        </authorList>
    </citation>
    <scope>NUCLEOTIDE SEQUENCE [LARGE SCALE GENOMIC DNA]</scope>
    <source>
        <strain>ATCC 39315 / El Tor Inaba N16961</strain>
    </source>
</reference>
<reference key="3">
    <citation type="journal article" date="2003" name="J. Bacteriol.">
        <title>Roles of NhaA, NhaB, and NhaD Na(+)/H(+) antiporters in survival of Vibrio cholerae in a saline environment.</title>
        <authorList>
            <person name="Herz K."/>
            <person name="Vimont S."/>
            <person name="Padan E."/>
            <person name="Berche P."/>
        </authorList>
    </citation>
    <scope>FUNCTION</scope>
    <scope>ACTIVITY REGULATION</scope>
    <scope>BIOPHYSICOCHEMICAL PROPERTIES</scope>
    <source>
        <strain>N18 / Serotype O1</strain>
    </source>
</reference>
<comment type="function">
    <text evidence="2 3">Na(+)/H(+) antiporter that extrudes sodium in exchange for external protons (PubMed:10781565, PubMed:12562793). Can also transport lithium (PubMed:12562793). Contributes to the survival of V.cholerae during the stationary and exponential growth phases in a saline environment (PubMed:12562793).</text>
</comment>
<comment type="catalytic activity">
    <reaction evidence="1">
        <text>Na(+)(in) + 2 H(+)(out) = Na(+)(out) + 2 H(+)(in)</text>
        <dbReference type="Rhea" id="RHEA:29251"/>
        <dbReference type="ChEBI" id="CHEBI:15378"/>
        <dbReference type="ChEBI" id="CHEBI:29101"/>
    </reaction>
    <physiologicalReaction direction="left-to-right" evidence="1">
        <dbReference type="Rhea" id="RHEA:29252"/>
    </physiologicalReaction>
</comment>
<comment type="catalytic activity">
    <reaction evidence="6">
        <text>Li(+)(in) + 2 H(+)(out) = Li(+)(out) + 2 H(+)(in)</text>
        <dbReference type="Rhea" id="RHEA:70431"/>
        <dbReference type="ChEBI" id="CHEBI:15378"/>
        <dbReference type="ChEBI" id="CHEBI:49713"/>
    </reaction>
    <physiologicalReaction direction="left-to-right" evidence="6">
        <dbReference type="Rhea" id="RHEA:70432"/>
    </physiologicalReaction>
</comment>
<comment type="activity regulation">
    <text evidence="3">Activity is regulated by pH (PubMed:12562793). Active at alkaline pH (PubMed:12562793).</text>
</comment>
<comment type="biophysicochemical properties">
    <kinetics>
        <KM evidence="3">0.65 mM for Na(+)</KM>
        <KM evidence="3">0.052 mM for Li(+)</KM>
    </kinetics>
</comment>
<comment type="subcellular location">
    <subcellularLocation>
        <location evidence="1">Cell inner membrane</location>
        <topology evidence="1">Multi-pass membrane protein</topology>
    </subcellularLocation>
</comment>
<comment type="induction">
    <text evidence="2">Induced by sodium, lithium and potassium.</text>
</comment>
<comment type="disruption phenotype">
    <text evidence="2">The growth of the inactivated mutant is not restricted at various pH and NaCl concentrations, although it is inhibited in the presence of LiCl at pH 8.5.</text>
</comment>
<comment type="similarity">
    <text evidence="1 5">Belongs to the NhaA Na(+)/H(+) (TC 2.A.33) antiporter family.</text>
</comment>
<organism>
    <name type="scientific">Vibrio cholerae serotype O1 (strain ATCC 39315 / El Tor Inaba N16961)</name>
    <dbReference type="NCBI Taxonomy" id="243277"/>
    <lineage>
        <taxon>Bacteria</taxon>
        <taxon>Pseudomonadati</taxon>
        <taxon>Pseudomonadota</taxon>
        <taxon>Gammaproteobacteria</taxon>
        <taxon>Vibrionales</taxon>
        <taxon>Vibrionaceae</taxon>
        <taxon>Vibrio</taxon>
    </lineage>
</organism>
<sequence length="382" mass="40316">MSDMIRDFFKMESAGGILLVIAAAIAMVIANSAMGEGYQAFLHTYVFGMSVSHWINDGLMAVFFLLIGLEVKRELLEGALKSRETAIFPAIAAVGGMLAPALIYVAFNFNDPAAIQGWAIPAATDIAFALGIMALLGKRVPVSLKVFLLALAIIDDLGVVVIIALFYSSDLSTIALTIGFIMTGVLFMLNAKHVTKLSIYLVAGLILWIAVLKSGVHATLAGVVIGFAIPLKGNKGEHSPLKHLEHALHPYVAFAILPVFAFANAGISLQGVSLAGLTSMLPLGVALGLFLGKPLGIFSFSWAAVKLGVAKLPEGINFKHIFAVSVLCGIGFTMSIFISSLAFGQANEAYDTYARLGILMGSTTAALLGYSLLRLSLPLKKA</sequence>